<protein>
    <recommendedName>
        <fullName evidence="1">Phosphoserine aminotransferase</fullName>
        <ecNumber evidence="1">2.6.1.52</ecNumber>
    </recommendedName>
    <alternativeName>
        <fullName evidence="1">Phosphohydroxythreonine aminotransferase</fullName>
        <shortName evidence="1">PSAT</shortName>
    </alternativeName>
</protein>
<comment type="function">
    <text evidence="1">Catalyzes the reversible conversion of 3-phosphohydroxypyruvate to phosphoserine and of 3-hydroxy-2-oxo-4-phosphonooxybutanoate to phosphohydroxythreonine.</text>
</comment>
<comment type="catalytic activity">
    <reaction evidence="1">
        <text>O-phospho-L-serine + 2-oxoglutarate = 3-phosphooxypyruvate + L-glutamate</text>
        <dbReference type="Rhea" id="RHEA:14329"/>
        <dbReference type="ChEBI" id="CHEBI:16810"/>
        <dbReference type="ChEBI" id="CHEBI:18110"/>
        <dbReference type="ChEBI" id="CHEBI:29985"/>
        <dbReference type="ChEBI" id="CHEBI:57524"/>
        <dbReference type="EC" id="2.6.1.52"/>
    </reaction>
</comment>
<comment type="catalytic activity">
    <reaction evidence="1">
        <text>4-(phosphooxy)-L-threonine + 2-oxoglutarate = (R)-3-hydroxy-2-oxo-4-phosphooxybutanoate + L-glutamate</text>
        <dbReference type="Rhea" id="RHEA:16573"/>
        <dbReference type="ChEBI" id="CHEBI:16810"/>
        <dbReference type="ChEBI" id="CHEBI:29985"/>
        <dbReference type="ChEBI" id="CHEBI:58452"/>
        <dbReference type="ChEBI" id="CHEBI:58538"/>
        <dbReference type="EC" id="2.6.1.52"/>
    </reaction>
</comment>
<comment type="cofactor">
    <cofactor evidence="1">
        <name>pyridoxal 5'-phosphate</name>
        <dbReference type="ChEBI" id="CHEBI:597326"/>
    </cofactor>
    <text evidence="1">Binds 1 pyridoxal phosphate per subunit.</text>
</comment>
<comment type="pathway">
    <text evidence="1">Amino-acid biosynthesis; L-serine biosynthesis; L-serine from 3-phospho-D-glycerate: step 2/3.</text>
</comment>
<comment type="pathway">
    <text evidence="1">Cofactor biosynthesis; pyridoxine 5'-phosphate biosynthesis; pyridoxine 5'-phosphate from D-erythrose 4-phosphate: step 3/5.</text>
</comment>
<comment type="subunit">
    <text evidence="1">Homodimer.</text>
</comment>
<comment type="subcellular location">
    <subcellularLocation>
        <location evidence="1">Cytoplasm</location>
    </subcellularLocation>
</comment>
<comment type="similarity">
    <text evidence="1">Belongs to the class-V pyridoxal-phosphate-dependent aminotransferase family. SerC subfamily.</text>
</comment>
<organism>
    <name type="scientific">Vibrio vulnificus (strain CMCP6)</name>
    <dbReference type="NCBI Taxonomy" id="216895"/>
    <lineage>
        <taxon>Bacteria</taxon>
        <taxon>Pseudomonadati</taxon>
        <taxon>Pseudomonadota</taxon>
        <taxon>Gammaproteobacteria</taxon>
        <taxon>Vibrionales</taxon>
        <taxon>Vibrionaceae</taxon>
        <taxon>Vibrio</taxon>
    </lineage>
</organism>
<dbReference type="EC" id="2.6.1.52" evidence="1"/>
<dbReference type="EMBL" id="AE016795">
    <property type="protein sequence ID" value="AAO11151.1"/>
    <property type="molecule type" value="Genomic_DNA"/>
</dbReference>
<dbReference type="RefSeq" id="WP_011080644.1">
    <property type="nucleotide sequence ID" value="NC_004459.3"/>
</dbReference>
<dbReference type="SMR" id="Q8D900"/>
<dbReference type="KEGG" id="vvu:VV1_2813"/>
<dbReference type="HOGENOM" id="CLU_034866_0_2_6"/>
<dbReference type="UniPathway" id="UPA00135">
    <property type="reaction ID" value="UER00197"/>
</dbReference>
<dbReference type="UniPathway" id="UPA00244">
    <property type="reaction ID" value="UER00311"/>
</dbReference>
<dbReference type="Proteomes" id="UP000002275">
    <property type="component" value="Chromosome 1"/>
</dbReference>
<dbReference type="GO" id="GO:0005737">
    <property type="term" value="C:cytoplasm"/>
    <property type="evidence" value="ECO:0007669"/>
    <property type="project" value="UniProtKB-SubCell"/>
</dbReference>
<dbReference type="GO" id="GO:0004648">
    <property type="term" value="F:O-phospho-L-serine:2-oxoglutarate aminotransferase activity"/>
    <property type="evidence" value="ECO:0007669"/>
    <property type="project" value="UniProtKB-UniRule"/>
</dbReference>
<dbReference type="GO" id="GO:0030170">
    <property type="term" value="F:pyridoxal phosphate binding"/>
    <property type="evidence" value="ECO:0007669"/>
    <property type="project" value="UniProtKB-UniRule"/>
</dbReference>
<dbReference type="GO" id="GO:0006564">
    <property type="term" value="P:L-serine biosynthetic process"/>
    <property type="evidence" value="ECO:0007669"/>
    <property type="project" value="UniProtKB-UniRule"/>
</dbReference>
<dbReference type="GO" id="GO:0008615">
    <property type="term" value="P:pyridoxine biosynthetic process"/>
    <property type="evidence" value="ECO:0007669"/>
    <property type="project" value="UniProtKB-UniRule"/>
</dbReference>
<dbReference type="CDD" id="cd00611">
    <property type="entry name" value="PSAT_like"/>
    <property type="match status" value="1"/>
</dbReference>
<dbReference type="FunFam" id="3.40.640.10:FF:000010">
    <property type="entry name" value="Phosphoserine aminotransferase"/>
    <property type="match status" value="1"/>
</dbReference>
<dbReference type="FunFam" id="3.90.1150.10:FF:000006">
    <property type="entry name" value="Phosphoserine aminotransferase"/>
    <property type="match status" value="1"/>
</dbReference>
<dbReference type="Gene3D" id="3.90.1150.10">
    <property type="entry name" value="Aspartate Aminotransferase, domain 1"/>
    <property type="match status" value="1"/>
</dbReference>
<dbReference type="Gene3D" id="3.40.640.10">
    <property type="entry name" value="Type I PLP-dependent aspartate aminotransferase-like (Major domain)"/>
    <property type="match status" value="1"/>
</dbReference>
<dbReference type="HAMAP" id="MF_00160">
    <property type="entry name" value="SerC_aminotrans_5"/>
    <property type="match status" value="1"/>
</dbReference>
<dbReference type="InterPro" id="IPR000192">
    <property type="entry name" value="Aminotrans_V_dom"/>
</dbReference>
<dbReference type="InterPro" id="IPR020578">
    <property type="entry name" value="Aminotrans_V_PyrdxlP_BS"/>
</dbReference>
<dbReference type="InterPro" id="IPR022278">
    <property type="entry name" value="Pser_aminoTfrase"/>
</dbReference>
<dbReference type="InterPro" id="IPR015424">
    <property type="entry name" value="PyrdxlP-dep_Trfase"/>
</dbReference>
<dbReference type="InterPro" id="IPR015421">
    <property type="entry name" value="PyrdxlP-dep_Trfase_major"/>
</dbReference>
<dbReference type="InterPro" id="IPR015422">
    <property type="entry name" value="PyrdxlP-dep_Trfase_small"/>
</dbReference>
<dbReference type="NCBIfam" id="NF003764">
    <property type="entry name" value="PRK05355.1"/>
    <property type="match status" value="1"/>
</dbReference>
<dbReference type="NCBIfam" id="TIGR01364">
    <property type="entry name" value="serC_1"/>
    <property type="match status" value="1"/>
</dbReference>
<dbReference type="PANTHER" id="PTHR43247">
    <property type="entry name" value="PHOSPHOSERINE AMINOTRANSFERASE"/>
    <property type="match status" value="1"/>
</dbReference>
<dbReference type="PANTHER" id="PTHR43247:SF1">
    <property type="entry name" value="PHOSPHOSERINE AMINOTRANSFERASE"/>
    <property type="match status" value="1"/>
</dbReference>
<dbReference type="Pfam" id="PF00266">
    <property type="entry name" value="Aminotran_5"/>
    <property type="match status" value="1"/>
</dbReference>
<dbReference type="PIRSF" id="PIRSF000525">
    <property type="entry name" value="SerC"/>
    <property type="match status" value="1"/>
</dbReference>
<dbReference type="SUPFAM" id="SSF53383">
    <property type="entry name" value="PLP-dependent transferases"/>
    <property type="match status" value="1"/>
</dbReference>
<dbReference type="PROSITE" id="PS00595">
    <property type="entry name" value="AA_TRANSFER_CLASS_5"/>
    <property type="match status" value="1"/>
</dbReference>
<keyword id="KW-0028">Amino-acid biosynthesis</keyword>
<keyword id="KW-0032">Aminotransferase</keyword>
<keyword id="KW-0963">Cytoplasm</keyword>
<keyword id="KW-0663">Pyridoxal phosphate</keyword>
<keyword id="KW-0664">Pyridoxine biosynthesis</keyword>
<keyword id="KW-0718">Serine biosynthesis</keyword>
<keyword id="KW-0808">Transferase</keyword>
<reference key="1">
    <citation type="submission" date="2002-12" db="EMBL/GenBank/DDBJ databases">
        <title>Complete genome sequence of Vibrio vulnificus CMCP6.</title>
        <authorList>
            <person name="Rhee J.H."/>
            <person name="Kim S.Y."/>
            <person name="Chung S.S."/>
            <person name="Kim J.J."/>
            <person name="Moon Y.H."/>
            <person name="Jeong H."/>
            <person name="Choy H.E."/>
        </authorList>
    </citation>
    <scope>NUCLEOTIDE SEQUENCE [LARGE SCALE GENOMIC DNA]</scope>
    <source>
        <strain>CMCP6</strain>
    </source>
</reference>
<proteinExistence type="inferred from homology"/>
<gene>
    <name evidence="1" type="primary">serC</name>
    <name type="ordered locus">VV1_2813</name>
</gene>
<accession>Q8D900</accession>
<sequence length="364" mass="40280">MEQNTDNVFNFSAGPAALPKPVMQQAQQELLNWQGLGTSVMEISHRSKEFIAVAEQSEQDLRDLLNIPDNYKVLFCQGGARAQFAAVPLNLLGDATTATYIDAGYWAESAVEEAKKYCQPDVFVAKAEKEGKQAVLPASEWQIHPDAAYVHFCPNETIDGIEINDLPVTDKPIVADMSSTILSREIDVSKYGVIYAGAQKNIGPSGIAIAIVRDDLLGLAKEVLPSILNYKVLAEQDSMFNTPPTFAWYLSGLVFKWLKAQGGVKAIEQVNREKAAILYNYIDESDFYINNVHPDNRSLMNVPFQMVKPELDAKFLKEAEALGLKSLKGHRVVGGMRASIYNAMPIEGVKALVDFMRQFEQENA</sequence>
<name>SERC_VIBVU</name>
<feature type="chain" id="PRO_0000150217" description="Phosphoserine aminotransferase">
    <location>
        <begin position="1"/>
        <end position="364"/>
    </location>
</feature>
<feature type="binding site" evidence="1">
    <location>
        <position position="46"/>
    </location>
    <ligand>
        <name>L-glutamate</name>
        <dbReference type="ChEBI" id="CHEBI:29985"/>
    </ligand>
</feature>
<feature type="binding site" evidence="1">
    <location>
        <begin position="80"/>
        <end position="81"/>
    </location>
    <ligand>
        <name>pyridoxal 5'-phosphate</name>
        <dbReference type="ChEBI" id="CHEBI:597326"/>
    </ligand>
</feature>
<feature type="binding site" evidence="1">
    <location>
        <position position="106"/>
    </location>
    <ligand>
        <name>pyridoxal 5'-phosphate</name>
        <dbReference type="ChEBI" id="CHEBI:597326"/>
    </ligand>
</feature>
<feature type="binding site" evidence="1">
    <location>
        <position position="157"/>
    </location>
    <ligand>
        <name>pyridoxal 5'-phosphate</name>
        <dbReference type="ChEBI" id="CHEBI:597326"/>
    </ligand>
</feature>
<feature type="binding site" evidence="1">
    <location>
        <position position="176"/>
    </location>
    <ligand>
        <name>pyridoxal 5'-phosphate</name>
        <dbReference type="ChEBI" id="CHEBI:597326"/>
    </ligand>
</feature>
<feature type="binding site" evidence="1">
    <location>
        <position position="199"/>
    </location>
    <ligand>
        <name>pyridoxal 5'-phosphate</name>
        <dbReference type="ChEBI" id="CHEBI:597326"/>
    </ligand>
</feature>
<feature type="binding site" evidence="1">
    <location>
        <begin position="241"/>
        <end position="242"/>
    </location>
    <ligand>
        <name>pyridoxal 5'-phosphate</name>
        <dbReference type="ChEBI" id="CHEBI:597326"/>
    </ligand>
</feature>
<feature type="modified residue" description="N6-(pyridoxal phosphate)lysine" evidence="1">
    <location>
        <position position="200"/>
    </location>
</feature>
<evidence type="ECO:0000255" key="1">
    <source>
        <dbReference type="HAMAP-Rule" id="MF_00160"/>
    </source>
</evidence>